<accession>A9CHR3</accession>
<sequence>MQMMSLEKEAAMETKTAEQRSLDYRNAMARLGAAVNIVTTDGAAGRAGFAATAVCSVSDNPPTLLVCLNRNASAYKVVKANGVICINTLAAHHEVLSTLFGGKTPAEERFAAGSWGVLETGAPVLEDALVSFDCRIREAHDGGTHDILICTVVDMKINAGDEALMYFNRRYRVL</sequence>
<dbReference type="EC" id="1.5.1.42" evidence="1"/>
<dbReference type="EMBL" id="AE007869">
    <property type="protein sequence ID" value="AAK88227.1"/>
    <property type="molecule type" value="Genomic_DNA"/>
</dbReference>
<dbReference type="PIR" id="AD2883">
    <property type="entry name" value="AD2883"/>
</dbReference>
<dbReference type="PIR" id="B97659">
    <property type="entry name" value="B97659"/>
</dbReference>
<dbReference type="RefSeq" id="NP_355442.1">
    <property type="nucleotide sequence ID" value="NC_003062.2"/>
</dbReference>
<dbReference type="RefSeq" id="WP_006312118.1">
    <property type="nucleotide sequence ID" value="NC_003062.2"/>
</dbReference>
<dbReference type="SMR" id="A9CHR3"/>
<dbReference type="STRING" id="176299.Atu2495"/>
<dbReference type="EnsemblBacteria" id="AAK88227">
    <property type="protein sequence ID" value="AAK88227"/>
    <property type="gene ID" value="Atu2495"/>
</dbReference>
<dbReference type="GeneID" id="1134533"/>
<dbReference type="KEGG" id="atu:Atu2495"/>
<dbReference type="PATRIC" id="fig|176299.10.peg.2507"/>
<dbReference type="eggNOG" id="COG1853">
    <property type="taxonomic scope" value="Bacteria"/>
</dbReference>
<dbReference type="HOGENOM" id="CLU_059021_2_2_5"/>
<dbReference type="OrthoDB" id="9789254at2"/>
<dbReference type="PhylomeDB" id="A9CHR3"/>
<dbReference type="BioCyc" id="AGRO:ATU2495-MONOMER"/>
<dbReference type="Proteomes" id="UP000000813">
    <property type="component" value="Chromosome circular"/>
</dbReference>
<dbReference type="GO" id="GO:0010181">
    <property type="term" value="F:FMN binding"/>
    <property type="evidence" value="ECO:0007669"/>
    <property type="project" value="InterPro"/>
</dbReference>
<dbReference type="GO" id="GO:0052874">
    <property type="term" value="F:FMN reductase (NADH) activity"/>
    <property type="evidence" value="ECO:0007669"/>
    <property type="project" value="UniProtKB-EC"/>
</dbReference>
<dbReference type="GO" id="GO:0008752">
    <property type="term" value="F:FMN reductase [NAD(P)H] activity"/>
    <property type="evidence" value="ECO:0007669"/>
    <property type="project" value="InterPro"/>
</dbReference>
<dbReference type="GO" id="GO:0042602">
    <property type="term" value="F:riboflavin reductase (NADPH) activity"/>
    <property type="evidence" value="ECO:0007669"/>
    <property type="project" value="UniProtKB-UniRule"/>
</dbReference>
<dbReference type="GO" id="GO:0019740">
    <property type="term" value="P:nitrogen utilization"/>
    <property type="evidence" value="ECO:0007669"/>
    <property type="project" value="UniProtKB-UniRule"/>
</dbReference>
<dbReference type="GO" id="GO:0006212">
    <property type="term" value="P:uracil catabolic process"/>
    <property type="evidence" value="ECO:0007669"/>
    <property type="project" value="UniProtKB-UniRule"/>
</dbReference>
<dbReference type="Gene3D" id="2.30.110.10">
    <property type="entry name" value="Electron Transport, Fmn-binding Protein, Chain A"/>
    <property type="match status" value="1"/>
</dbReference>
<dbReference type="HAMAP" id="MF_00833">
    <property type="entry name" value="RutF"/>
    <property type="match status" value="1"/>
</dbReference>
<dbReference type="InterPro" id="IPR002563">
    <property type="entry name" value="Flavin_Rdtase-like_dom"/>
</dbReference>
<dbReference type="InterPro" id="IPR050268">
    <property type="entry name" value="NADH-dep_flavin_reductase"/>
</dbReference>
<dbReference type="InterPro" id="IPR019917">
    <property type="entry name" value="RutF"/>
</dbReference>
<dbReference type="InterPro" id="IPR012349">
    <property type="entry name" value="Split_barrel_FMN-bd"/>
</dbReference>
<dbReference type="NCBIfam" id="TIGR03615">
    <property type="entry name" value="RutF"/>
    <property type="match status" value="1"/>
</dbReference>
<dbReference type="PANTHER" id="PTHR30466">
    <property type="entry name" value="FLAVIN REDUCTASE"/>
    <property type="match status" value="1"/>
</dbReference>
<dbReference type="PANTHER" id="PTHR30466:SF1">
    <property type="entry name" value="FMN REDUCTASE (NADH) RUTF"/>
    <property type="match status" value="1"/>
</dbReference>
<dbReference type="Pfam" id="PF01613">
    <property type="entry name" value="Flavin_Reduct"/>
    <property type="match status" value="1"/>
</dbReference>
<dbReference type="SMART" id="SM00903">
    <property type="entry name" value="Flavin_Reduct"/>
    <property type="match status" value="1"/>
</dbReference>
<dbReference type="SUPFAM" id="SSF50475">
    <property type="entry name" value="FMN-binding split barrel"/>
    <property type="match status" value="1"/>
</dbReference>
<protein>
    <recommendedName>
        <fullName evidence="1">FMN reductase (NADH) RutF</fullName>
        <ecNumber evidence="1">1.5.1.42</ecNumber>
    </recommendedName>
    <alternativeName>
        <fullName evidence="1">FMN reductase</fullName>
    </alternativeName>
    <alternativeName>
        <fullName evidence="1">NADH-flavin reductase RutF</fullName>
    </alternativeName>
    <alternativeName>
        <fullName evidence="1">NADH:flavin oxidoreductase</fullName>
    </alternativeName>
</protein>
<feature type="chain" id="PRO_0000402991" description="FMN reductase (NADH) RutF">
    <location>
        <begin position="1"/>
        <end position="174"/>
    </location>
</feature>
<evidence type="ECO:0000255" key="1">
    <source>
        <dbReference type="HAMAP-Rule" id="MF_00833"/>
    </source>
</evidence>
<proteinExistence type="inferred from homology"/>
<comment type="function">
    <text evidence="1">Catalyzes the reduction of FMN to FMNH2 which is used to reduce pyrimidine by RutA via the Rut pathway.</text>
</comment>
<comment type="catalytic activity">
    <reaction evidence="1">
        <text>FMNH2 + NAD(+) = FMN + NADH + 2 H(+)</text>
        <dbReference type="Rhea" id="RHEA:21620"/>
        <dbReference type="ChEBI" id="CHEBI:15378"/>
        <dbReference type="ChEBI" id="CHEBI:57540"/>
        <dbReference type="ChEBI" id="CHEBI:57618"/>
        <dbReference type="ChEBI" id="CHEBI:57945"/>
        <dbReference type="ChEBI" id="CHEBI:58210"/>
        <dbReference type="EC" id="1.5.1.42"/>
    </reaction>
</comment>
<comment type="similarity">
    <text evidence="1">Belongs to the non-flavoprotein flavin reductase family. RutF subfamily.</text>
</comment>
<name>RUTF_AGRFC</name>
<gene>
    <name evidence="1" type="primary">rutF</name>
    <name type="ordered locus">Atu2495</name>
    <name type="ORF">AGR_C_4534</name>
</gene>
<organism>
    <name type="scientific">Agrobacterium fabrum (strain C58 / ATCC 33970)</name>
    <name type="common">Agrobacterium tumefaciens (strain C58)</name>
    <dbReference type="NCBI Taxonomy" id="176299"/>
    <lineage>
        <taxon>Bacteria</taxon>
        <taxon>Pseudomonadati</taxon>
        <taxon>Pseudomonadota</taxon>
        <taxon>Alphaproteobacteria</taxon>
        <taxon>Hyphomicrobiales</taxon>
        <taxon>Rhizobiaceae</taxon>
        <taxon>Rhizobium/Agrobacterium group</taxon>
        <taxon>Agrobacterium</taxon>
        <taxon>Agrobacterium tumefaciens complex</taxon>
    </lineage>
</organism>
<keyword id="KW-0285">Flavoprotein</keyword>
<keyword id="KW-0288">FMN</keyword>
<keyword id="KW-0520">NAD</keyword>
<keyword id="KW-0560">Oxidoreductase</keyword>
<keyword id="KW-1185">Reference proteome</keyword>
<reference key="1">
    <citation type="journal article" date="2001" name="Science">
        <title>The genome of the natural genetic engineer Agrobacterium tumefaciens C58.</title>
        <authorList>
            <person name="Wood D.W."/>
            <person name="Setubal J.C."/>
            <person name="Kaul R."/>
            <person name="Monks D.E."/>
            <person name="Kitajima J.P."/>
            <person name="Okura V.K."/>
            <person name="Zhou Y."/>
            <person name="Chen L."/>
            <person name="Wood G.E."/>
            <person name="Almeida N.F. Jr."/>
            <person name="Woo L."/>
            <person name="Chen Y."/>
            <person name="Paulsen I.T."/>
            <person name="Eisen J.A."/>
            <person name="Karp P.D."/>
            <person name="Bovee D. Sr."/>
            <person name="Chapman P."/>
            <person name="Clendenning J."/>
            <person name="Deatherage G."/>
            <person name="Gillet W."/>
            <person name="Grant C."/>
            <person name="Kutyavin T."/>
            <person name="Levy R."/>
            <person name="Li M.-J."/>
            <person name="McClelland E."/>
            <person name="Palmieri A."/>
            <person name="Raymond C."/>
            <person name="Rouse G."/>
            <person name="Saenphimmachak C."/>
            <person name="Wu Z."/>
            <person name="Romero P."/>
            <person name="Gordon D."/>
            <person name="Zhang S."/>
            <person name="Yoo H."/>
            <person name="Tao Y."/>
            <person name="Biddle P."/>
            <person name="Jung M."/>
            <person name="Krespan W."/>
            <person name="Perry M."/>
            <person name="Gordon-Kamm B."/>
            <person name="Liao L."/>
            <person name="Kim S."/>
            <person name="Hendrick C."/>
            <person name="Zhao Z.-Y."/>
            <person name="Dolan M."/>
            <person name="Chumley F."/>
            <person name="Tingey S.V."/>
            <person name="Tomb J.-F."/>
            <person name="Gordon M.P."/>
            <person name="Olson M.V."/>
            <person name="Nester E.W."/>
        </authorList>
    </citation>
    <scope>NUCLEOTIDE SEQUENCE [LARGE SCALE GENOMIC DNA]</scope>
    <source>
        <strain>C58 / ATCC 33970</strain>
    </source>
</reference>
<reference key="2">
    <citation type="journal article" date="2001" name="Science">
        <title>Genome sequence of the plant pathogen and biotechnology agent Agrobacterium tumefaciens C58.</title>
        <authorList>
            <person name="Goodner B."/>
            <person name="Hinkle G."/>
            <person name="Gattung S."/>
            <person name="Miller N."/>
            <person name="Blanchard M."/>
            <person name="Qurollo B."/>
            <person name="Goldman B.S."/>
            <person name="Cao Y."/>
            <person name="Askenazi M."/>
            <person name="Halling C."/>
            <person name="Mullin L."/>
            <person name="Houmiel K."/>
            <person name="Gordon J."/>
            <person name="Vaudin M."/>
            <person name="Iartchouk O."/>
            <person name="Epp A."/>
            <person name="Liu F."/>
            <person name="Wollam C."/>
            <person name="Allinger M."/>
            <person name="Doughty D."/>
            <person name="Scott C."/>
            <person name="Lappas C."/>
            <person name="Markelz B."/>
            <person name="Flanagan C."/>
            <person name="Crowell C."/>
            <person name="Gurson J."/>
            <person name="Lomo C."/>
            <person name="Sear C."/>
            <person name="Strub G."/>
            <person name="Cielo C."/>
            <person name="Slater S."/>
        </authorList>
    </citation>
    <scope>NUCLEOTIDE SEQUENCE [LARGE SCALE GENOMIC DNA]</scope>
    <source>
        <strain>C58 / ATCC 33970</strain>
    </source>
</reference>